<feature type="propeptide" id="PRO_0000431170" evidence="1">
    <location>
        <begin position="1"/>
        <end position="14"/>
    </location>
</feature>
<feature type="chain" id="PRO_0000361429" description="Photosystem II CP43 reaction center protein" evidence="1">
    <location>
        <begin position="15"/>
        <end position="473"/>
    </location>
</feature>
<feature type="transmembrane region" description="Helical" evidence="1">
    <location>
        <begin position="69"/>
        <end position="93"/>
    </location>
</feature>
<feature type="transmembrane region" description="Helical" evidence="1">
    <location>
        <begin position="134"/>
        <end position="155"/>
    </location>
</feature>
<feature type="transmembrane region" description="Helical" evidence="1">
    <location>
        <begin position="178"/>
        <end position="200"/>
    </location>
</feature>
<feature type="transmembrane region" description="Helical" evidence="1">
    <location>
        <begin position="255"/>
        <end position="275"/>
    </location>
</feature>
<feature type="transmembrane region" description="Helical" evidence="1">
    <location>
        <begin position="291"/>
        <end position="312"/>
    </location>
</feature>
<feature type="transmembrane region" description="Helical" evidence="1">
    <location>
        <begin position="447"/>
        <end position="471"/>
    </location>
</feature>
<feature type="binding site" evidence="1">
    <location>
        <position position="367"/>
    </location>
    <ligand>
        <name>[CaMn4O5] cluster</name>
        <dbReference type="ChEBI" id="CHEBI:189552"/>
    </ligand>
</feature>
<feature type="modified residue" description="N-acetylthreonine" evidence="1">
    <location>
        <position position="15"/>
    </location>
</feature>
<feature type="modified residue" description="Phosphothreonine" evidence="1">
    <location>
        <position position="15"/>
    </location>
</feature>
<name>PSBC_NEPOL</name>
<evidence type="ECO:0000255" key="1">
    <source>
        <dbReference type="HAMAP-Rule" id="MF_01496"/>
    </source>
</evidence>
<organism>
    <name type="scientific">Nephroselmis olivacea</name>
    <name type="common">Green alga</name>
    <dbReference type="NCBI Taxonomy" id="31312"/>
    <lineage>
        <taxon>Eukaryota</taxon>
        <taxon>Viridiplantae</taxon>
        <taxon>Chlorophyta</taxon>
        <taxon>Nephroselmidophyceae</taxon>
        <taxon>Nephroselmidales</taxon>
        <taxon>Nephroselmidaceae</taxon>
        <taxon>Nephroselmis</taxon>
    </lineage>
</organism>
<geneLocation type="chloroplast"/>
<keyword id="KW-0007">Acetylation</keyword>
<keyword id="KW-0148">Chlorophyll</keyword>
<keyword id="KW-0150">Chloroplast</keyword>
<keyword id="KW-0157">Chromophore</keyword>
<keyword id="KW-0464">Manganese</keyword>
<keyword id="KW-0472">Membrane</keyword>
<keyword id="KW-0479">Metal-binding</keyword>
<keyword id="KW-0597">Phosphoprotein</keyword>
<keyword id="KW-0602">Photosynthesis</keyword>
<keyword id="KW-0604">Photosystem II</keyword>
<keyword id="KW-0934">Plastid</keyword>
<keyword id="KW-0793">Thylakoid</keyword>
<keyword id="KW-0812">Transmembrane</keyword>
<keyword id="KW-1133">Transmembrane helix</keyword>
<comment type="function">
    <text evidence="1">One of the components of the core complex of photosystem II (PSII). It binds chlorophyll and helps catalyze the primary light-induced photochemical processes of PSII. PSII is a light-driven water:plastoquinone oxidoreductase, using light energy to abstract electrons from H(2)O, generating O(2) and a proton gradient subsequently used for ATP formation.</text>
</comment>
<comment type="cofactor">
    <text evidence="1">Binds multiple chlorophylls and provides some of the ligands for the Ca-4Mn-5O cluster of the oxygen-evolving complex. It may also provide a ligand for a Cl- that is required for oxygen evolution. PSII binds additional chlorophylls, carotenoids and specific lipids.</text>
</comment>
<comment type="subunit">
    <text evidence="1">PSII is composed of 1 copy each of membrane proteins PsbA, PsbB, PsbC, PsbD, PsbE, PsbF, PsbH, PsbI, PsbJ, PsbK, PsbL, PsbM, PsbT, PsbX, PsbY, PsbZ, Psb30/Ycf12, at least 3 peripheral proteins of the oxygen-evolving complex and a large number of cofactors. It forms dimeric complexes.</text>
</comment>
<comment type="subcellular location">
    <subcellularLocation>
        <location evidence="1">Plastid</location>
        <location evidence="1">Chloroplast thylakoid membrane</location>
        <topology evidence="1">Multi-pass membrane protein</topology>
    </subcellularLocation>
</comment>
<comment type="similarity">
    <text evidence="1">Belongs to the PsbB/PsbC family. PsbC subfamily.</text>
</comment>
<accession>Q9TKZ9</accession>
<reference key="1">
    <citation type="journal article" date="1999" name="Proc. Natl. Acad. Sci. U.S.A.">
        <title>The complete chloroplast DNA sequence of the green alga Nephroselmis olivacea: insights into the architecture of ancestral chloroplast genomes.</title>
        <authorList>
            <person name="Turmel M."/>
            <person name="Otis C."/>
            <person name="Lemieux C."/>
        </authorList>
    </citation>
    <scope>NUCLEOTIDE SEQUENCE [LARGE SCALE GENOMIC DNA]</scope>
    <source>
        <strain>NIES-484 / S-N-5-8</strain>
    </source>
</reference>
<proteinExistence type="inferred from homology"/>
<protein>
    <recommendedName>
        <fullName evidence="1">Photosystem II CP43 reaction center protein</fullName>
    </recommendedName>
    <alternativeName>
        <fullName evidence="1">PSII 43 kDa protein</fullName>
    </alternativeName>
    <alternativeName>
        <fullName evidence="1">Protein CP-43</fullName>
    </alternativeName>
</protein>
<gene>
    <name evidence="1" type="primary">psbC</name>
</gene>
<sequence length="473" mass="51855">MKNLYSLRRFYHVETLFNGTLIVGGRDQESTGFAWWAGNARLINLSGKLLGAHVAHAGLIVFWAGAMNLFEVAHFVPEKPMYEQGLILLPHLATLGYGVGPGGEVIDTFPYFVSGVLHLISSAVLGFGGVYHSLIGPETLEESFPFFGYVWKDKNKMTTILGIHLVLLGLGALLLVLKARYLGGVYDTWAPGGGDVRVITNPTTSPAVIFGYILKSPFGGEGWIVSVDNMEDVIGGHLWIGLLCVFGGIWHILTKPFGWARRAFVWSGEAYLSYSLGAISVMGFIACCFVWFNNTVYPSEFYGPTGPEASQAQAFTFLVRDQRLGANVGSAQGPTGLGKYLMRSPTGEIIFGGETMRFWDTRAPWIEPLRGPNGLDLSKLKNDIQPWQERRSAEYMTHAPLGSLNSVGGVATEINAVNFVSPRSWLSTSHFVLGFFFFVAHLWHAGRARAAAAGFEKGIDRDTEPTLFMRPLD</sequence>
<dbReference type="EMBL" id="AF137379">
    <property type="protein sequence ID" value="AAD54817.1"/>
    <property type="molecule type" value="Genomic_DNA"/>
</dbReference>
<dbReference type="RefSeq" id="NP_050846.2">
    <property type="nucleotide sequence ID" value="NC_000927.1"/>
</dbReference>
<dbReference type="SMR" id="Q9TKZ9"/>
<dbReference type="GeneID" id="801944"/>
<dbReference type="GO" id="GO:0009535">
    <property type="term" value="C:chloroplast thylakoid membrane"/>
    <property type="evidence" value="ECO:0007669"/>
    <property type="project" value="UniProtKB-SubCell"/>
</dbReference>
<dbReference type="GO" id="GO:0009523">
    <property type="term" value="C:photosystem II"/>
    <property type="evidence" value="ECO:0007669"/>
    <property type="project" value="UniProtKB-KW"/>
</dbReference>
<dbReference type="GO" id="GO:0016168">
    <property type="term" value="F:chlorophyll binding"/>
    <property type="evidence" value="ECO:0007669"/>
    <property type="project" value="UniProtKB-UniRule"/>
</dbReference>
<dbReference type="GO" id="GO:0045156">
    <property type="term" value="F:electron transporter, transferring electrons within the cyclic electron transport pathway of photosynthesis activity"/>
    <property type="evidence" value="ECO:0007669"/>
    <property type="project" value="InterPro"/>
</dbReference>
<dbReference type="GO" id="GO:0046872">
    <property type="term" value="F:metal ion binding"/>
    <property type="evidence" value="ECO:0007669"/>
    <property type="project" value="UniProtKB-KW"/>
</dbReference>
<dbReference type="GO" id="GO:0009772">
    <property type="term" value="P:photosynthetic electron transport in photosystem II"/>
    <property type="evidence" value="ECO:0007669"/>
    <property type="project" value="InterPro"/>
</dbReference>
<dbReference type="FunFam" id="1.10.10.670:FF:000001">
    <property type="entry name" value="Photosystem II CP43 reaction center protein"/>
    <property type="match status" value="1"/>
</dbReference>
<dbReference type="Gene3D" id="1.10.10.670">
    <property type="entry name" value="photosystem ii from thermosynechococcus elongatus"/>
    <property type="match status" value="1"/>
</dbReference>
<dbReference type="HAMAP" id="MF_01496">
    <property type="entry name" value="PSII_PsbC_CP43"/>
    <property type="match status" value="1"/>
</dbReference>
<dbReference type="InterPro" id="IPR000932">
    <property type="entry name" value="PS_antenna-like"/>
</dbReference>
<dbReference type="InterPro" id="IPR036001">
    <property type="entry name" value="PS_II_antenna-like_sf"/>
</dbReference>
<dbReference type="InterPro" id="IPR005869">
    <property type="entry name" value="PSII_PsbC"/>
</dbReference>
<dbReference type="InterPro" id="IPR044900">
    <property type="entry name" value="PSII_PsbC_sf"/>
</dbReference>
<dbReference type="NCBIfam" id="TIGR01153">
    <property type="entry name" value="psbC"/>
    <property type="match status" value="1"/>
</dbReference>
<dbReference type="Pfam" id="PF00421">
    <property type="entry name" value="PSII"/>
    <property type="match status" value="1"/>
</dbReference>
<dbReference type="SUPFAM" id="SSF161077">
    <property type="entry name" value="Photosystem II antenna protein-like"/>
    <property type="match status" value="1"/>
</dbReference>